<organism>
    <name type="scientific">Xanthomonas oryzae pv. oryzae (strain MAFF 311018)</name>
    <dbReference type="NCBI Taxonomy" id="342109"/>
    <lineage>
        <taxon>Bacteria</taxon>
        <taxon>Pseudomonadati</taxon>
        <taxon>Pseudomonadota</taxon>
        <taxon>Gammaproteobacteria</taxon>
        <taxon>Lysobacterales</taxon>
        <taxon>Lysobacteraceae</taxon>
        <taxon>Xanthomonas</taxon>
    </lineage>
</organism>
<feature type="chain" id="PRO_0000256644" description="Trigger factor">
    <location>
        <begin position="1"/>
        <end position="430"/>
    </location>
</feature>
<feature type="domain" description="PPIase FKBP-type" evidence="1">
    <location>
        <begin position="157"/>
        <end position="242"/>
    </location>
</feature>
<protein>
    <recommendedName>
        <fullName evidence="1">Trigger factor</fullName>
        <shortName evidence="1">TF</shortName>
        <ecNumber evidence="1">5.2.1.8</ecNumber>
    </recommendedName>
    <alternativeName>
        <fullName evidence="1">PPIase</fullName>
    </alternativeName>
</protein>
<accession>Q2P6Z1</accession>
<name>TIG_XANOM</name>
<reference key="1">
    <citation type="journal article" date="2005" name="Jpn. Agric. Res. Q.">
        <title>Genome sequence of Xanthomonas oryzae pv. oryzae suggests contribution of large numbers of effector genes and insertion sequences to its race diversity.</title>
        <authorList>
            <person name="Ochiai H."/>
            <person name="Inoue Y."/>
            <person name="Takeya M."/>
            <person name="Sasaki A."/>
            <person name="Kaku H."/>
        </authorList>
    </citation>
    <scope>NUCLEOTIDE SEQUENCE [LARGE SCALE GENOMIC DNA]</scope>
    <source>
        <strain>MAFF 311018</strain>
    </source>
</reference>
<dbReference type="EC" id="5.2.1.8" evidence="1"/>
<dbReference type="EMBL" id="AP008229">
    <property type="protein sequence ID" value="BAE67686.1"/>
    <property type="molecule type" value="Genomic_DNA"/>
</dbReference>
<dbReference type="RefSeq" id="WP_011407726.1">
    <property type="nucleotide sequence ID" value="NC_007705.1"/>
</dbReference>
<dbReference type="SMR" id="Q2P6Z1"/>
<dbReference type="KEGG" id="xom:XOO0931"/>
<dbReference type="HOGENOM" id="CLU_033058_2_0_6"/>
<dbReference type="GO" id="GO:0005737">
    <property type="term" value="C:cytoplasm"/>
    <property type="evidence" value="ECO:0007669"/>
    <property type="project" value="UniProtKB-SubCell"/>
</dbReference>
<dbReference type="GO" id="GO:0003755">
    <property type="term" value="F:peptidyl-prolyl cis-trans isomerase activity"/>
    <property type="evidence" value="ECO:0007669"/>
    <property type="project" value="UniProtKB-UniRule"/>
</dbReference>
<dbReference type="GO" id="GO:0044183">
    <property type="term" value="F:protein folding chaperone"/>
    <property type="evidence" value="ECO:0007669"/>
    <property type="project" value="TreeGrafter"/>
</dbReference>
<dbReference type="GO" id="GO:0043022">
    <property type="term" value="F:ribosome binding"/>
    <property type="evidence" value="ECO:0007669"/>
    <property type="project" value="TreeGrafter"/>
</dbReference>
<dbReference type="GO" id="GO:0051083">
    <property type="term" value="P:'de novo' cotranslational protein folding"/>
    <property type="evidence" value="ECO:0007669"/>
    <property type="project" value="TreeGrafter"/>
</dbReference>
<dbReference type="GO" id="GO:0051301">
    <property type="term" value="P:cell division"/>
    <property type="evidence" value="ECO:0007669"/>
    <property type="project" value="UniProtKB-KW"/>
</dbReference>
<dbReference type="GO" id="GO:0061077">
    <property type="term" value="P:chaperone-mediated protein folding"/>
    <property type="evidence" value="ECO:0007669"/>
    <property type="project" value="TreeGrafter"/>
</dbReference>
<dbReference type="GO" id="GO:0015031">
    <property type="term" value="P:protein transport"/>
    <property type="evidence" value="ECO:0007669"/>
    <property type="project" value="UniProtKB-UniRule"/>
</dbReference>
<dbReference type="GO" id="GO:0043335">
    <property type="term" value="P:protein unfolding"/>
    <property type="evidence" value="ECO:0007669"/>
    <property type="project" value="TreeGrafter"/>
</dbReference>
<dbReference type="Gene3D" id="3.10.50.40">
    <property type="match status" value="1"/>
</dbReference>
<dbReference type="Gene3D" id="3.30.70.1050">
    <property type="entry name" value="Trigger factor ribosome-binding domain"/>
    <property type="match status" value="1"/>
</dbReference>
<dbReference type="Gene3D" id="1.10.3120.10">
    <property type="entry name" value="Trigger factor, C-terminal domain"/>
    <property type="match status" value="1"/>
</dbReference>
<dbReference type="HAMAP" id="MF_00303">
    <property type="entry name" value="Trigger_factor_Tig"/>
    <property type="match status" value="1"/>
</dbReference>
<dbReference type="InterPro" id="IPR046357">
    <property type="entry name" value="PPIase_dom_sf"/>
</dbReference>
<dbReference type="InterPro" id="IPR005215">
    <property type="entry name" value="Trig_fac"/>
</dbReference>
<dbReference type="InterPro" id="IPR008880">
    <property type="entry name" value="Trigger_fac_C"/>
</dbReference>
<dbReference type="InterPro" id="IPR037041">
    <property type="entry name" value="Trigger_fac_C_sf"/>
</dbReference>
<dbReference type="InterPro" id="IPR008881">
    <property type="entry name" value="Trigger_fac_ribosome-bd_bac"/>
</dbReference>
<dbReference type="InterPro" id="IPR036611">
    <property type="entry name" value="Trigger_fac_ribosome-bd_sf"/>
</dbReference>
<dbReference type="InterPro" id="IPR027304">
    <property type="entry name" value="Trigger_fact/SurA_dom_sf"/>
</dbReference>
<dbReference type="NCBIfam" id="TIGR00115">
    <property type="entry name" value="tig"/>
    <property type="match status" value="1"/>
</dbReference>
<dbReference type="PANTHER" id="PTHR30560">
    <property type="entry name" value="TRIGGER FACTOR CHAPERONE AND PEPTIDYL-PROLYL CIS/TRANS ISOMERASE"/>
    <property type="match status" value="1"/>
</dbReference>
<dbReference type="PANTHER" id="PTHR30560:SF3">
    <property type="entry name" value="TRIGGER FACTOR-LIKE PROTEIN TIG, CHLOROPLASTIC"/>
    <property type="match status" value="1"/>
</dbReference>
<dbReference type="Pfam" id="PF05698">
    <property type="entry name" value="Trigger_C"/>
    <property type="match status" value="1"/>
</dbReference>
<dbReference type="Pfam" id="PF05697">
    <property type="entry name" value="Trigger_N"/>
    <property type="match status" value="1"/>
</dbReference>
<dbReference type="PIRSF" id="PIRSF003095">
    <property type="entry name" value="Trigger_factor"/>
    <property type="match status" value="1"/>
</dbReference>
<dbReference type="SUPFAM" id="SSF54534">
    <property type="entry name" value="FKBP-like"/>
    <property type="match status" value="1"/>
</dbReference>
<dbReference type="SUPFAM" id="SSF109998">
    <property type="entry name" value="Triger factor/SurA peptide-binding domain-like"/>
    <property type="match status" value="1"/>
</dbReference>
<dbReference type="SUPFAM" id="SSF102735">
    <property type="entry name" value="Trigger factor ribosome-binding domain"/>
    <property type="match status" value="1"/>
</dbReference>
<proteinExistence type="inferred from homology"/>
<evidence type="ECO:0000255" key="1">
    <source>
        <dbReference type="HAMAP-Rule" id="MF_00303"/>
    </source>
</evidence>
<keyword id="KW-0131">Cell cycle</keyword>
<keyword id="KW-0132">Cell division</keyword>
<keyword id="KW-0143">Chaperone</keyword>
<keyword id="KW-0963">Cytoplasm</keyword>
<keyword id="KW-0413">Isomerase</keyword>
<keyword id="KW-0697">Rotamase</keyword>
<gene>
    <name evidence="1" type="primary">tig</name>
    <name type="ordered locus">XOO0931</name>
</gene>
<comment type="function">
    <text evidence="1">Involved in protein export. Acts as a chaperone by maintaining the newly synthesized protein in an open conformation. Functions as a peptidyl-prolyl cis-trans isomerase.</text>
</comment>
<comment type="catalytic activity">
    <reaction evidence="1">
        <text>[protein]-peptidylproline (omega=180) = [protein]-peptidylproline (omega=0)</text>
        <dbReference type="Rhea" id="RHEA:16237"/>
        <dbReference type="Rhea" id="RHEA-COMP:10747"/>
        <dbReference type="Rhea" id="RHEA-COMP:10748"/>
        <dbReference type="ChEBI" id="CHEBI:83833"/>
        <dbReference type="ChEBI" id="CHEBI:83834"/>
        <dbReference type="EC" id="5.2.1.8"/>
    </reaction>
</comment>
<comment type="subcellular location">
    <subcellularLocation>
        <location>Cytoplasm</location>
    </subcellularLocation>
    <text evidence="1">About half TF is bound to the ribosome near the polypeptide exit tunnel while the other half is free in the cytoplasm.</text>
</comment>
<comment type="domain">
    <text evidence="1">Consists of 3 domains; the N-terminus binds the ribosome, the middle domain has PPIase activity, while the C-terminus has intrinsic chaperone activity on its own.</text>
</comment>
<comment type="similarity">
    <text evidence="1">Belongs to the FKBP-type PPIase family. Tig subfamily.</text>
</comment>
<sequence>MQASIESTGNLERRLTFTLPQERLETHVGGRLRELARTTRIKGFRPGKVPTKVIEQRFGQQVRAEAMEGLLRETFDSAVREHSLRLAGNPRIDQGETDFDFVATFEVVPDFGDIDVTTLSVVRATAEVTDADIDQMIENLRLQRRIWNPVERGAQAGDLVALETWSQAGDERLPADGVETGSSVLGSGVMFDQIEKGLEGLTKGEEKTLSVDFPAEWRVPQLAGKTVQVHVKAVEVSEPVLPAVDKEFIKSFGVKSGDAEQFRADIRTNLERELKGALMNRLRREVGEQLIAAYAHVEMPPRLVENEARSMLAQQVEQVRRSGRDPGQVPADAHQGFMDAAAKRVLVGLLVGEVARRNELRLESRRVSDTLRLIASTYEEPEQVIEMYRNDPQLMNGLQSRVMKEQVIDWIAERAQHTEQSLSFQDAIRV</sequence>